<accession>A5I4Z3</accession>
<accession>A7G659</accession>
<keyword id="KW-0963">Cytoplasm</keyword>
<keyword id="KW-0378">Hydrolase</keyword>
<keyword id="KW-0540">Nuclease</keyword>
<keyword id="KW-1185">Reference proteome</keyword>
<keyword id="KW-0690">Ribosome biogenesis</keyword>
<comment type="function">
    <text evidence="1">Could be a nuclease involved in processing of the 5'-end of pre-16S rRNA.</text>
</comment>
<comment type="subcellular location">
    <subcellularLocation>
        <location evidence="1">Cytoplasm</location>
    </subcellularLocation>
</comment>
<comment type="similarity">
    <text evidence="1">Belongs to the YqgF nuclease family.</text>
</comment>
<reference key="1">
    <citation type="journal article" date="2007" name="Genome Res.">
        <title>Genome sequence of a proteolytic (Group I) Clostridium botulinum strain Hall A and comparative analysis of the clostridial genomes.</title>
        <authorList>
            <person name="Sebaihia M."/>
            <person name="Peck M.W."/>
            <person name="Minton N.P."/>
            <person name="Thomson N.R."/>
            <person name="Holden M.T.G."/>
            <person name="Mitchell W.J."/>
            <person name="Carter A.T."/>
            <person name="Bentley S.D."/>
            <person name="Mason D.R."/>
            <person name="Crossman L."/>
            <person name="Paul C.J."/>
            <person name="Ivens A."/>
            <person name="Wells-Bennik M.H.J."/>
            <person name="Davis I.J."/>
            <person name="Cerdeno-Tarraga A.M."/>
            <person name="Churcher C."/>
            <person name="Quail M.A."/>
            <person name="Chillingworth T."/>
            <person name="Feltwell T."/>
            <person name="Fraser A."/>
            <person name="Goodhead I."/>
            <person name="Hance Z."/>
            <person name="Jagels K."/>
            <person name="Larke N."/>
            <person name="Maddison M."/>
            <person name="Moule S."/>
            <person name="Mungall K."/>
            <person name="Norbertczak H."/>
            <person name="Rabbinowitsch E."/>
            <person name="Sanders M."/>
            <person name="Simmonds M."/>
            <person name="White B."/>
            <person name="Whithead S."/>
            <person name="Parkhill J."/>
        </authorList>
    </citation>
    <scope>NUCLEOTIDE SEQUENCE [LARGE SCALE GENOMIC DNA]</scope>
    <source>
        <strain>Hall / ATCC 3502 / NCTC 13319 / Type A</strain>
    </source>
</reference>
<reference key="2">
    <citation type="journal article" date="2007" name="PLoS ONE">
        <title>Analysis of the neurotoxin complex genes in Clostridium botulinum A1-A4 and B1 strains: BoNT/A3, /Ba4 and /B1 clusters are located within plasmids.</title>
        <authorList>
            <person name="Smith T.J."/>
            <person name="Hill K.K."/>
            <person name="Foley B.T."/>
            <person name="Detter J.C."/>
            <person name="Munk A.C."/>
            <person name="Bruce D.C."/>
            <person name="Doggett N.A."/>
            <person name="Smith L.A."/>
            <person name="Marks J.D."/>
            <person name="Xie G."/>
            <person name="Brettin T.S."/>
        </authorList>
    </citation>
    <scope>NUCLEOTIDE SEQUENCE [LARGE SCALE GENOMIC DNA]</scope>
    <source>
        <strain>Hall / ATCC 3502 / NCTC 13319 / Type A</strain>
    </source>
</reference>
<proteinExistence type="inferred from homology"/>
<organism>
    <name type="scientific">Clostridium botulinum (strain Hall / ATCC 3502 / NCTC 13319 / Type A)</name>
    <dbReference type="NCBI Taxonomy" id="441771"/>
    <lineage>
        <taxon>Bacteria</taxon>
        <taxon>Bacillati</taxon>
        <taxon>Bacillota</taxon>
        <taxon>Clostridia</taxon>
        <taxon>Eubacteriales</taxon>
        <taxon>Clostridiaceae</taxon>
        <taxon>Clostridium</taxon>
    </lineage>
</organism>
<feature type="chain" id="PRO_1000061505" description="Putative pre-16S rRNA nuclease">
    <location>
        <begin position="1"/>
        <end position="137"/>
    </location>
</feature>
<name>YQGF_CLOBH</name>
<sequence>MRILGLDIGDRTIGIAISDPLGFTAQGITTIRRKSEAYDLEEIKKICDKYEVDTIVSGLPKNMNGTLGPQSEKVLEFCDLIKEHLNIEIKMWDERLTTVAATRAMLEADLSRSKRKKIVDKVAATYILQGYLDSLSK</sequence>
<gene>
    <name type="ordered locus">CBO2562</name>
    <name type="ordered locus">CLC_2433</name>
</gene>
<dbReference type="EC" id="3.1.-.-" evidence="1"/>
<dbReference type="EMBL" id="CP000727">
    <property type="protein sequence ID" value="ABS37311.1"/>
    <property type="molecule type" value="Genomic_DNA"/>
</dbReference>
<dbReference type="EMBL" id="AM412317">
    <property type="protein sequence ID" value="CAL84120.1"/>
    <property type="molecule type" value="Genomic_DNA"/>
</dbReference>
<dbReference type="RefSeq" id="YP_001255058.1">
    <property type="nucleotide sequence ID" value="NC_009495.1"/>
</dbReference>
<dbReference type="RefSeq" id="YP_001388274.1">
    <property type="nucleotide sequence ID" value="NC_009698.1"/>
</dbReference>
<dbReference type="SMR" id="A5I4Z3"/>
<dbReference type="GeneID" id="5186817"/>
<dbReference type="KEGG" id="cbh:CLC_2433"/>
<dbReference type="KEGG" id="cbo:CBO2562"/>
<dbReference type="PATRIC" id="fig|413999.7.peg.2541"/>
<dbReference type="HOGENOM" id="CLU_098240_2_0_9"/>
<dbReference type="PRO" id="PR:A5I4Z3"/>
<dbReference type="Proteomes" id="UP000001986">
    <property type="component" value="Chromosome"/>
</dbReference>
<dbReference type="GO" id="GO:0005737">
    <property type="term" value="C:cytoplasm"/>
    <property type="evidence" value="ECO:0007669"/>
    <property type="project" value="UniProtKB-SubCell"/>
</dbReference>
<dbReference type="GO" id="GO:0004518">
    <property type="term" value="F:nuclease activity"/>
    <property type="evidence" value="ECO:0007669"/>
    <property type="project" value="UniProtKB-KW"/>
</dbReference>
<dbReference type="GO" id="GO:0000967">
    <property type="term" value="P:rRNA 5'-end processing"/>
    <property type="evidence" value="ECO:0000318"/>
    <property type="project" value="GO_Central"/>
</dbReference>
<dbReference type="CDD" id="cd16964">
    <property type="entry name" value="YqgF"/>
    <property type="match status" value="1"/>
</dbReference>
<dbReference type="FunFam" id="3.30.420.140:FF:000003">
    <property type="entry name" value="Putative pre-16S rRNA nuclease"/>
    <property type="match status" value="1"/>
</dbReference>
<dbReference type="Gene3D" id="3.30.420.140">
    <property type="entry name" value="YqgF/RNase H-like domain"/>
    <property type="match status" value="1"/>
</dbReference>
<dbReference type="HAMAP" id="MF_00651">
    <property type="entry name" value="Nuclease_YqgF"/>
    <property type="match status" value="1"/>
</dbReference>
<dbReference type="InterPro" id="IPR012337">
    <property type="entry name" value="RNaseH-like_sf"/>
</dbReference>
<dbReference type="InterPro" id="IPR005227">
    <property type="entry name" value="YqgF"/>
</dbReference>
<dbReference type="InterPro" id="IPR006641">
    <property type="entry name" value="YqgF/RNaseH-like_dom"/>
</dbReference>
<dbReference type="InterPro" id="IPR037027">
    <property type="entry name" value="YqgF/RNaseH-like_dom_sf"/>
</dbReference>
<dbReference type="NCBIfam" id="TIGR00250">
    <property type="entry name" value="RNAse_H_YqgF"/>
    <property type="match status" value="1"/>
</dbReference>
<dbReference type="PANTHER" id="PTHR33317">
    <property type="entry name" value="POLYNUCLEOTIDYL TRANSFERASE, RIBONUCLEASE H-LIKE SUPERFAMILY PROTEIN"/>
    <property type="match status" value="1"/>
</dbReference>
<dbReference type="PANTHER" id="PTHR33317:SF4">
    <property type="entry name" value="POLYNUCLEOTIDYL TRANSFERASE, RIBONUCLEASE H-LIKE SUPERFAMILY PROTEIN"/>
    <property type="match status" value="1"/>
</dbReference>
<dbReference type="Pfam" id="PF03652">
    <property type="entry name" value="RuvX"/>
    <property type="match status" value="1"/>
</dbReference>
<dbReference type="SMART" id="SM00732">
    <property type="entry name" value="YqgFc"/>
    <property type="match status" value="1"/>
</dbReference>
<dbReference type="SUPFAM" id="SSF53098">
    <property type="entry name" value="Ribonuclease H-like"/>
    <property type="match status" value="1"/>
</dbReference>
<evidence type="ECO:0000255" key="1">
    <source>
        <dbReference type="HAMAP-Rule" id="MF_00651"/>
    </source>
</evidence>
<protein>
    <recommendedName>
        <fullName evidence="1">Putative pre-16S rRNA nuclease</fullName>
        <ecNumber evidence="1">3.1.-.-</ecNumber>
    </recommendedName>
</protein>